<gene>
    <name type="primary">GEMIN4</name>
</gene>
<protein>
    <recommendedName>
        <fullName>Gem-associated protein 4</fullName>
        <shortName>Gemin-4</shortName>
    </recommendedName>
    <alternativeName>
        <fullName>Component of gems 4</fullName>
    </alternativeName>
    <alternativeName>
        <fullName>p97</fullName>
    </alternativeName>
</protein>
<reference key="1">
    <citation type="journal article" date="2000" name="J. Cell Biol.">
        <title>Gemin4: a novel component of the SMN complex that is found in both gems and nucleoli.</title>
        <authorList>
            <person name="Charroux B."/>
            <person name="Pellizzoni L."/>
            <person name="Perkinson R.A."/>
            <person name="Yong J."/>
            <person name="Shevchenko A."/>
            <person name="Mann M."/>
            <person name="Dreyfuss G."/>
        </authorList>
    </citation>
    <scope>NUCLEOTIDE SEQUENCE [MRNA]</scope>
    <scope>IDENTIFICATION BY MASS SPECTROMETRY</scope>
</reference>
<reference key="2">
    <citation type="journal article" date="2006" name="Nature">
        <title>DNA sequence of human chromosome 17 and analysis of rearrangement in the human lineage.</title>
        <authorList>
            <person name="Zody M.C."/>
            <person name="Garber M."/>
            <person name="Adams D.J."/>
            <person name="Sharpe T."/>
            <person name="Harrow J."/>
            <person name="Lupski J.R."/>
            <person name="Nicholson C."/>
            <person name="Searle S.M."/>
            <person name="Wilming L."/>
            <person name="Young S.K."/>
            <person name="Abouelleil A."/>
            <person name="Allen N.R."/>
            <person name="Bi W."/>
            <person name="Bloom T."/>
            <person name="Borowsky M.L."/>
            <person name="Bugalter B.E."/>
            <person name="Butler J."/>
            <person name="Chang J.L."/>
            <person name="Chen C.-K."/>
            <person name="Cook A."/>
            <person name="Corum B."/>
            <person name="Cuomo C.A."/>
            <person name="de Jong P.J."/>
            <person name="DeCaprio D."/>
            <person name="Dewar K."/>
            <person name="FitzGerald M."/>
            <person name="Gilbert J."/>
            <person name="Gibson R."/>
            <person name="Gnerre S."/>
            <person name="Goldstein S."/>
            <person name="Grafham D.V."/>
            <person name="Grocock R."/>
            <person name="Hafez N."/>
            <person name="Hagopian D.S."/>
            <person name="Hart E."/>
            <person name="Norman C.H."/>
            <person name="Humphray S."/>
            <person name="Jaffe D.B."/>
            <person name="Jones M."/>
            <person name="Kamal M."/>
            <person name="Khodiyar V.K."/>
            <person name="LaButti K."/>
            <person name="Laird G."/>
            <person name="Lehoczky J."/>
            <person name="Liu X."/>
            <person name="Lokyitsang T."/>
            <person name="Loveland J."/>
            <person name="Lui A."/>
            <person name="Macdonald P."/>
            <person name="Major J.E."/>
            <person name="Matthews L."/>
            <person name="Mauceli E."/>
            <person name="McCarroll S.A."/>
            <person name="Mihalev A.H."/>
            <person name="Mudge J."/>
            <person name="Nguyen C."/>
            <person name="Nicol R."/>
            <person name="O'Leary S.B."/>
            <person name="Osoegawa K."/>
            <person name="Schwartz D.C."/>
            <person name="Shaw-Smith C."/>
            <person name="Stankiewicz P."/>
            <person name="Steward C."/>
            <person name="Swarbreck D."/>
            <person name="Venkataraman V."/>
            <person name="Whittaker C.A."/>
            <person name="Yang X."/>
            <person name="Zimmer A.R."/>
            <person name="Bradley A."/>
            <person name="Hubbard T."/>
            <person name="Birren B.W."/>
            <person name="Rogers J."/>
            <person name="Lander E.S."/>
            <person name="Nusbaum C."/>
        </authorList>
    </citation>
    <scope>NUCLEOTIDE SEQUENCE [LARGE SCALE GENOMIC DNA]</scope>
</reference>
<reference key="3">
    <citation type="journal article" date="2001" name="Genome Res.">
        <title>Towards a catalog of human genes and proteins: sequencing and analysis of 500 novel complete protein coding human cDNAs.</title>
        <authorList>
            <person name="Wiemann S."/>
            <person name="Weil B."/>
            <person name="Wellenreuther R."/>
            <person name="Gassenhuber J."/>
            <person name="Glassl S."/>
            <person name="Ansorge W."/>
            <person name="Boecher M."/>
            <person name="Bloecker H."/>
            <person name="Bauersachs S."/>
            <person name="Blum H."/>
            <person name="Lauber J."/>
            <person name="Duesterhoeft A."/>
            <person name="Beyer A."/>
            <person name="Koehrer K."/>
            <person name="Strack N."/>
            <person name="Mewes H.-W."/>
            <person name="Ottenwaelder B."/>
            <person name="Obermaier B."/>
            <person name="Tampe J."/>
            <person name="Heubner D."/>
            <person name="Wambutt R."/>
            <person name="Korn B."/>
            <person name="Klein M."/>
            <person name="Poustka A."/>
        </authorList>
    </citation>
    <scope>NUCLEOTIDE SEQUENCE [LARGE SCALE MRNA] OF 186-1058</scope>
    <source>
        <tissue>Testis</tissue>
    </source>
</reference>
<reference key="4">
    <citation type="journal article" date="2003" name="J. Cell Sci.">
        <title>Protein phosphatase 4 interacts with the survival of motor neurons complex and enhances the temporal localisation of snRNPs.</title>
        <authorList>
            <person name="Carnegie G.K."/>
            <person name="Sleeman J.E."/>
            <person name="Morrice N."/>
            <person name="Hastie C.J."/>
            <person name="Peggie M.W."/>
            <person name="Philp A."/>
            <person name="Lamond A.I."/>
            <person name="Cohen P.T.W."/>
        </authorList>
    </citation>
    <scope>INTERACTION WITH PPP4R2</scope>
</reference>
<reference key="5">
    <citation type="journal article" date="2005" name="Mol. Cell. Biol.">
        <title>Specific sequence features, recognized by the SMN complex, identify snRNAs and determine their fate as snRNPs.</title>
        <authorList>
            <person name="Golembe T.J."/>
            <person name="Yong J."/>
            <person name="Dreyfuss G."/>
        </authorList>
    </citation>
    <scope>IDENTIFICATION IN THE SMN COMPLEX</scope>
    <scope>IDENTIFICATION IN SMN-SM COMPLEX</scope>
</reference>
<reference key="6">
    <citation type="journal article" date="2007" name="J. Biol. Chem.">
        <title>A comprehensive interaction map of the human survival of motor neuron (SMN) complex.</title>
        <authorList>
            <person name="Otter S."/>
            <person name="Grimmler M."/>
            <person name="Neuenkirchen N."/>
            <person name="Chari A."/>
            <person name="Sickmann A."/>
            <person name="Fischer U."/>
        </authorList>
    </citation>
    <scope>IDENTIFICATION IN THE SMN COMPLEX</scope>
    <scope>INTERACTION WITH GEMIN3 AND GEMIN8</scope>
</reference>
<reference key="7">
    <citation type="journal article" date="2008" name="Cell">
        <title>An assembly chaperone collaborates with the SMN complex to generate spliceosomal SnRNPs.</title>
        <authorList>
            <person name="Chari A."/>
            <person name="Golas M.M."/>
            <person name="Klingenhager M."/>
            <person name="Neuenkirchen N."/>
            <person name="Sander B."/>
            <person name="Englbrecht C."/>
            <person name="Sickmann A."/>
            <person name="Stark H."/>
            <person name="Fischer U."/>
        </authorList>
    </citation>
    <scope>FUNCTION IN SNRNP BIOGENESIS</scope>
    <scope>IDENTIFICATION IN SMN-SM COMPLEX</scope>
</reference>
<reference key="8">
    <citation type="journal article" date="2008" name="Proc. Natl. Acad. Sci. U.S.A.">
        <title>A quantitative atlas of mitotic phosphorylation.</title>
        <authorList>
            <person name="Dephoure N."/>
            <person name="Zhou C."/>
            <person name="Villen J."/>
            <person name="Beausoleil S.A."/>
            <person name="Bakalarski C.E."/>
            <person name="Elledge S.J."/>
            <person name="Gygi S.P."/>
        </authorList>
    </citation>
    <scope>PHOSPHORYLATION [LARGE SCALE ANALYSIS] AT SER-205</scope>
    <scope>IDENTIFICATION BY MASS SPECTROMETRY [LARGE SCALE ANALYSIS]</scope>
    <source>
        <tissue>Cervix carcinoma</tissue>
    </source>
</reference>
<reference key="9">
    <citation type="journal article" date="2009" name="Anal. Chem.">
        <title>Lys-N and trypsin cover complementary parts of the phosphoproteome in a refined SCX-based approach.</title>
        <authorList>
            <person name="Gauci S."/>
            <person name="Helbig A.O."/>
            <person name="Slijper M."/>
            <person name="Krijgsveld J."/>
            <person name="Heck A.J."/>
            <person name="Mohammed S."/>
        </authorList>
    </citation>
    <scope>ACETYLATION [LARGE SCALE ANALYSIS] AT MET-1</scope>
    <scope>IDENTIFICATION BY MASS SPECTROMETRY [LARGE SCALE ANALYSIS]</scope>
</reference>
<reference key="10">
    <citation type="journal article" date="2011" name="BMC Syst. Biol.">
        <title>Initial characterization of the human central proteome.</title>
        <authorList>
            <person name="Burkard T.R."/>
            <person name="Planyavsky M."/>
            <person name="Kaupe I."/>
            <person name="Breitwieser F.P."/>
            <person name="Buerckstuemmer T."/>
            <person name="Bennett K.L."/>
            <person name="Superti-Furga G."/>
            <person name="Colinge J."/>
        </authorList>
    </citation>
    <scope>IDENTIFICATION BY MASS SPECTROMETRY [LARGE SCALE ANALYSIS]</scope>
</reference>
<reference key="11">
    <citation type="journal article" date="2013" name="J. Proteome Res.">
        <title>Toward a comprehensive characterization of a human cancer cell phosphoproteome.</title>
        <authorList>
            <person name="Zhou H."/>
            <person name="Di Palma S."/>
            <person name="Preisinger C."/>
            <person name="Peng M."/>
            <person name="Polat A.N."/>
            <person name="Heck A.J."/>
            <person name="Mohammed S."/>
        </authorList>
    </citation>
    <scope>PHOSPHORYLATION [LARGE SCALE ANALYSIS] AT THR-84 AND SER-86</scope>
    <scope>IDENTIFICATION BY MASS SPECTROMETRY [LARGE SCALE ANALYSIS]</scope>
    <source>
        <tissue>Erythroleukemia</tissue>
    </source>
</reference>
<reference key="12">
    <citation type="journal article" date="2021" name="Nat. Commun.">
        <title>Loss of function mutations in GEMIN5 cause a neurodevelopmental disorder.</title>
        <authorList>
            <person name="Kour S."/>
            <person name="Rajan D.S."/>
            <person name="Fortuna T.R."/>
            <person name="Anderson E.N."/>
            <person name="Ward C."/>
            <person name="Lee Y."/>
            <person name="Lee S."/>
            <person name="Shin Y.B."/>
            <person name="Chae J.H."/>
            <person name="Choi M."/>
            <person name="Siquier K."/>
            <person name="Cantagrel V."/>
            <person name="Amiel J."/>
            <person name="Stolerman E.S."/>
            <person name="Barnett S.S."/>
            <person name="Cousin M.A."/>
            <person name="Castro D."/>
            <person name="McDonald K."/>
            <person name="Kirmse B."/>
            <person name="Nemeth A.H."/>
            <person name="Rajasundaram D."/>
            <person name="Innes A.M."/>
            <person name="Lynch D."/>
            <person name="Frosk P."/>
            <person name="Collins A."/>
            <person name="Gibbons M."/>
            <person name="Yang M."/>
            <person name="Desguerre I."/>
            <person name="Boddaert N."/>
            <person name="Gitiaux C."/>
            <person name="Rydning S.L."/>
            <person name="Selmer K.K."/>
            <person name="Urreizti R."/>
            <person name="Garcia-Oguiza A."/>
            <person name="Osorio A.N."/>
            <person name="Verdura E."/>
            <person name="Pujol A."/>
            <person name="McCurry H.R."/>
            <person name="Landers J.E."/>
            <person name="Agnihotri S."/>
            <person name="Andriescu E.C."/>
            <person name="Moody S.B."/>
            <person name="Phornphutkul C."/>
            <person name="Sacoto M.J.G."/>
            <person name="Begtrup A."/>
            <person name="Houlden H."/>
            <person name="Kirschner J."/>
            <person name="Schorling D."/>
            <person name="Rudnik-Schoeneborn S."/>
            <person name="Strom T.M."/>
            <person name="Leiz S."/>
            <person name="Juliette K."/>
            <person name="Richardson R."/>
            <person name="Yang Y."/>
            <person name="Zhang Y."/>
            <person name="Wang M."/>
            <person name="Wang J."/>
            <person name="Wang X."/>
            <person name="Platzer K."/>
            <person name="Donkervoort S."/>
            <person name="Boennemann C.G."/>
            <person name="Wagner M."/>
            <person name="Issa M.Y."/>
            <person name="Elbendary H.M."/>
            <person name="Stanley V."/>
            <person name="Maroofian R."/>
            <person name="Gleeson J.G."/>
            <person name="Zaki M.S."/>
            <person name="Senderek J."/>
            <person name="Pandey U.B."/>
        </authorList>
    </citation>
    <scope>INTERACTION WITH GEMIN5</scope>
</reference>
<reference key="13">
    <citation type="journal article" date="2015" name="Cell Rep.">
        <title>Accelerating novel candidate gene discovery in neurogenetic disorders via whole-exome sequencing of prescreened multiplex consanguineous families.</title>
        <authorList>
            <person name="Alazami A.M."/>
            <person name="Patel N."/>
            <person name="Shamseldin H.E."/>
            <person name="Anazi S."/>
            <person name="Al-Dosari M.S."/>
            <person name="Alzahrani F."/>
            <person name="Hijazi H."/>
            <person name="Alshammari M."/>
            <person name="Aldahmesh M.A."/>
            <person name="Salih M.A."/>
            <person name="Faqeih E."/>
            <person name="Alhashem A."/>
            <person name="Bashiri F.A."/>
            <person name="Al-Owain M."/>
            <person name="Kentab A.Y."/>
            <person name="Sogaty S."/>
            <person name="Al Tala S."/>
            <person name="Temsah M.H."/>
            <person name="Tulbah M."/>
            <person name="Aljelaify R.F."/>
            <person name="Alshahwan S.A."/>
            <person name="Seidahmed M.Z."/>
            <person name="Alhadid A.A."/>
            <person name="Aldhalaan H."/>
            <person name="Alqallaf F."/>
            <person name="Kurdi W."/>
            <person name="Alfadhel M."/>
            <person name="Babay Z."/>
            <person name="Alsogheer M."/>
            <person name="Kaya N."/>
            <person name="Al-Hassnan Z.N."/>
            <person name="Abdel-Salam G.M."/>
            <person name="Al-Sannaa N."/>
            <person name="Al Mutairi F."/>
            <person name="El Khashab H.Y."/>
            <person name="Bohlega S."/>
            <person name="Jia X."/>
            <person name="Nguyen H.C."/>
            <person name="Hammami R."/>
            <person name="Adly N."/>
            <person name="Mohamed J.Y."/>
            <person name="Abdulwahab F."/>
            <person name="Ibrahim N."/>
            <person name="Naim E.A."/>
            <person name="Al-Younes B."/>
            <person name="Meyer B.F."/>
            <person name="Hashem M."/>
            <person name="Shaheen R."/>
            <person name="Xiong Y."/>
            <person name="Abouelhoda M."/>
            <person name="Aldeeri A.A."/>
            <person name="Monies D.M."/>
            <person name="Alkuraya F.S."/>
        </authorList>
    </citation>
    <scope>VARIANT NEDMCR ARG-818</scope>
    <scope>INVOLVEMENT IN NEDMCR</scope>
</reference>
<reference key="14">
    <citation type="journal article" date="2019" name="Genet. Med.">
        <title>Autozygome and high throughput confirmation of disease genes candidacy.</title>
        <authorList>
            <person name="Maddirevula S."/>
            <person name="Alzahrani F."/>
            <person name="Al-Owain M."/>
            <person name="Al Muhaizea M.A."/>
            <person name="Kayyali H.R."/>
            <person name="AlHashem A."/>
            <person name="Rahbeeni Z."/>
            <person name="Al-Otaibi M."/>
            <person name="Alzaidan H.I."/>
            <person name="Balobaid A."/>
            <person name="El Khashab H.Y."/>
            <person name="Bubshait D.K."/>
            <person name="Faden M."/>
            <person name="Yamani S.A."/>
            <person name="Dabbagh O."/>
            <person name="Al-Mureikhi M."/>
            <person name="Jasser A.A."/>
            <person name="Alsaif H.S."/>
            <person name="Alluhaydan I."/>
            <person name="Seidahmed M.Z."/>
            <person name="Alabbasi B.H."/>
            <person name="Almogarri I."/>
            <person name="Kurdi W."/>
            <person name="Akleh H."/>
            <person name="Qari A."/>
            <person name="Al Tala S.M."/>
            <person name="Alhomaidi S."/>
            <person name="Kentab A.Y."/>
            <person name="Salih M.A."/>
            <person name="Chedrawi A."/>
            <person name="Alameer S."/>
            <person name="Tabarki B."/>
            <person name="Shamseldin H.E."/>
            <person name="Patel N."/>
            <person name="Ibrahim N."/>
            <person name="Abdulwahab F."/>
            <person name="Samira M."/>
            <person name="Goljan E."/>
            <person name="Abouelhoda M."/>
            <person name="Meyer B.F."/>
            <person name="Hashem M."/>
            <person name="Shaheen R."/>
            <person name="AlShahwan S."/>
            <person name="Alfadhel M."/>
            <person name="Ben-Omran T."/>
            <person name="Al-Qattan M.M."/>
            <person name="Monies D."/>
            <person name="Alkuraya F.S."/>
        </authorList>
    </citation>
    <scope>VARIANT NEDMCR LEU-105</scope>
</reference>
<reference key="15">
    <citation type="journal article" date="2022" name="Am. J. Med. Genet. A">
        <title>Further delineation of GEMIN4 related neurodevelopmental disorder with microcephaly, cataract, and renal abnormalities syndrome.</title>
        <authorList>
            <person name="Altassan R."/>
            <person name="Qudair A."/>
            <person name="Alokaili R."/>
            <person name="Alhasan K."/>
            <person name="Faqeih E.A."/>
            <person name="Alhashem A."/>
            <person name="Alowain M."/>
            <person name="Alsayed M."/>
            <person name="Rahbeeni Z."/>
            <person name="Albadi L."/>
            <person name="Alkuraya F.S."/>
            <person name="Anderson E.N."/>
            <person name="Rajan D."/>
            <person name="Pandey U.B."/>
        </authorList>
    </citation>
    <scope>VARIANTS NEDMCR LEU-105 AND ARG-818</scope>
</reference>
<organism>
    <name type="scientific">Homo sapiens</name>
    <name type="common">Human</name>
    <dbReference type="NCBI Taxonomy" id="9606"/>
    <lineage>
        <taxon>Eukaryota</taxon>
        <taxon>Metazoa</taxon>
        <taxon>Chordata</taxon>
        <taxon>Craniata</taxon>
        <taxon>Vertebrata</taxon>
        <taxon>Euteleostomi</taxon>
        <taxon>Mammalia</taxon>
        <taxon>Eutheria</taxon>
        <taxon>Euarchontoglires</taxon>
        <taxon>Primates</taxon>
        <taxon>Haplorrhini</taxon>
        <taxon>Catarrhini</taxon>
        <taxon>Hominidae</taxon>
        <taxon>Homo</taxon>
    </lineage>
</organism>
<accession>P57678</accession>
<accession>Q9NZS7</accession>
<accession>Q9UG32</accession>
<accession>Q9Y4Q2</accession>
<dbReference type="EMBL" id="AF173856">
    <property type="protein sequence ID" value="AAF35283.1"/>
    <property type="molecule type" value="mRNA"/>
</dbReference>
<dbReference type="EMBL" id="AC087392">
    <property type="status" value="NOT_ANNOTATED_CDS"/>
    <property type="molecule type" value="Genomic_DNA"/>
</dbReference>
<dbReference type="EMBL" id="AL080150">
    <property type="protein sequence ID" value="CAB45743.3"/>
    <property type="molecule type" value="mRNA"/>
</dbReference>
<dbReference type="EMBL" id="AL080167">
    <property type="protein sequence ID" value="CAB45755.1"/>
    <property type="molecule type" value="mRNA"/>
</dbReference>
<dbReference type="CCDS" id="CCDS45559.1"/>
<dbReference type="PIR" id="T12535">
    <property type="entry name" value="T12535"/>
</dbReference>
<dbReference type="RefSeq" id="NP_056536.2">
    <property type="nucleotide sequence ID" value="NM_015721.3"/>
</dbReference>
<dbReference type="BioGRID" id="119102">
    <property type="interactions" value="296"/>
</dbReference>
<dbReference type="ComplexPortal" id="CPX-6031">
    <property type="entry name" value="Survival motor neuron complex"/>
</dbReference>
<dbReference type="CORUM" id="P57678"/>
<dbReference type="FunCoup" id="P57678">
    <property type="interactions" value="1544"/>
</dbReference>
<dbReference type="IntAct" id="P57678">
    <property type="interactions" value="160"/>
</dbReference>
<dbReference type="MINT" id="P57678"/>
<dbReference type="STRING" id="9606.ENSP00000321706"/>
<dbReference type="BindingDB" id="P57678"/>
<dbReference type="ChEMBL" id="CHEMBL5169137"/>
<dbReference type="GlyGen" id="P57678">
    <property type="glycosylation" value="2 sites, 1 O-linked glycan (1 site)"/>
</dbReference>
<dbReference type="iPTMnet" id="P57678"/>
<dbReference type="PhosphoSitePlus" id="P57678"/>
<dbReference type="SwissPalm" id="P57678"/>
<dbReference type="BioMuta" id="GEMIN4"/>
<dbReference type="DMDM" id="322510030"/>
<dbReference type="jPOST" id="P57678"/>
<dbReference type="MassIVE" id="P57678"/>
<dbReference type="PaxDb" id="9606-ENSP00000321706"/>
<dbReference type="PeptideAtlas" id="P57678"/>
<dbReference type="ProteomicsDB" id="57005"/>
<dbReference type="Pumba" id="P57678"/>
<dbReference type="Antibodypedia" id="22646">
    <property type="antibodies" value="211 antibodies from 26 providers"/>
</dbReference>
<dbReference type="DNASU" id="50628"/>
<dbReference type="Ensembl" id="ENST00000319004.6">
    <property type="protein sequence ID" value="ENSP00000321706.5"/>
    <property type="gene ID" value="ENSG00000179409.11"/>
</dbReference>
<dbReference type="GeneID" id="50628"/>
<dbReference type="KEGG" id="hsa:50628"/>
<dbReference type="MANE-Select" id="ENST00000319004.6">
    <property type="protein sequence ID" value="ENSP00000321706.5"/>
    <property type="RefSeq nucleotide sequence ID" value="NM_015721.3"/>
    <property type="RefSeq protein sequence ID" value="NP_056536.2"/>
</dbReference>
<dbReference type="UCSC" id="uc002frs.2">
    <property type="organism name" value="human"/>
</dbReference>
<dbReference type="AGR" id="HGNC:15717"/>
<dbReference type="CTD" id="50628"/>
<dbReference type="DisGeNET" id="50628"/>
<dbReference type="GeneCards" id="GEMIN4"/>
<dbReference type="HGNC" id="HGNC:15717">
    <property type="gene designation" value="GEMIN4"/>
</dbReference>
<dbReference type="HPA" id="ENSG00000179409">
    <property type="expression patterns" value="Low tissue specificity"/>
</dbReference>
<dbReference type="MalaCards" id="GEMIN4"/>
<dbReference type="MIM" id="606969">
    <property type="type" value="gene"/>
</dbReference>
<dbReference type="MIM" id="617913">
    <property type="type" value="phenotype"/>
</dbReference>
<dbReference type="neXtProt" id="NX_P57678"/>
<dbReference type="OpenTargets" id="ENSG00000179409"/>
<dbReference type="VEuPathDB" id="HostDB:ENSG00000179409"/>
<dbReference type="eggNOG" id="ENOG502QRX9">
    <property type="taxonomic scope" value="Eukaryota"/>
</dbReference>
<dbReference type="GeneTree" id="ENSGT00390000012296"/>
<dbReference type="InParanoid" id="P57678"/>
<dbReference type="OMA" id="SCHNWLP"/>
<dbReference type="OrthoDB" id="9875414at2759"/>
<dbReference type="PAN-GO" id="P57678">
    <property type="GO annotations" value="2 GO annotations based on evolutionary models"/>
</dbReference>
<dbReference type="PhylomeDB" id="P57678"/>
<dbReference type="TreeFam" id="TF329445"/>
<dbReference type="PathwayCommons" id="P57678"/>
<dbReference type="Reactome" id="R-HSA-191859">
    <property type="pathway name" value="snRNP Assembly"/>
</dbReference>
<dbReference type="Reactome" id="R-HSA-9754678">
    <property type="pathway name" value="SARS-CoV-2 modulates host translation machinery"/>
</dbReference>
<dbReference type="SignaLink" id="P57678"/>
<dbReference type="SIGNOR" id="P57678"/>
<dbReference type="BioGRID-ORCS" id="50628">
    <property type="hits" value="646 hits in 1161 CRISPR screens"/>
</dbReference>
<dbReference type="ChiTaRS" id="GEMIN4">
    <property type="organism name" value="human"/>
</dbReference>
<dbReference type="GeneWiki" id="GEMIN4"/>
<dbReference type="GenomeRNAi" id="50628"/>
<dbReference type="Pharos" id="P57678">
    <property type="development level" value="Tbio"/>
</dbReference>
<dbReference type="PRO" id="PR:P57678"/>
<dbReference type="Proteomes" id="UP000005640">
    <property type="component" value="Chromosome 17"/>
</dbReference>
<dbReference type="RNAct" id="P57678">
    <property type="molecule type" value="protein"/>
</dbReference>
<dbReference type="Bgee" id="ENSG00000179409">
    <property type="expression patterns" value="Expressed in sperm and 179 other cell types or tissues"/>
</dbReference>
<dbReference type="ExpressionAtlas" id="P57678">
    <property type="expression patterns" value="baseline and differential"/>
</dbReference>
<dbReference type="GO" id="GO:0015030">
    <property type="term" value="C:Cajal body"/>
    <property type="evidence" value="ECO:0000314"/>
    <property type="project" value="MGI"/>
</dbReference>
<dbReference type="GO" id="GO:0005737">
    <property type="term" value="C:cytoplasm"/>
    <property type="evidence" value="ECO:0000304"/>
    <property type="project" value="ProtInc"/>
</dbReference>
<dbReference type="GO" id="GO:0005829">
    <property type="term" value="C:cytosol"/>
    <property type="evidence" value="ECO:0000314"/>
    <property type="project" value="UniProtKB"/>
</dbReference>
<dbReference type="GO" id="GO:0070062">
    <property type="term" value="C:extracellular exosome"/>
    <property type="evidence" value="ECO:0007005"/>
    <property type="project" value="UniProtKB"/>
</dbReference>
<dbReference type="GO" id="GO:0097504">
    <property type="term" value="C:Gemini of Cajal bodies"/>
    <property type="evidence" value="ECO:0007669"/>
    <property type="project" value="UniProtKB-SubCell"/>
</dbReference>
<dbReference type="GO" id="GO:0016020">
    <property type="term" value="C:membrane"/>
    <property type="evidence" value="ECO:0007005"/>
    <property type="project" value="UniProtKB"/>
</dbReference>
<dbReference type="GO" id="GO:0016604">
    <property type="term" value="C:nuclear body"/>
    <property type="evidence" value="ECO:0000314"/>
    <property type="project" value="HPA"/>
</dbReference>
<dbReference type="GO" id="GO:0005730">
    <property type="term" value="C:nucleolus"/>
    <property type="evidence" value="ECO:0000314"/>
    <property type="project" value="MGI"/>
</dbReference>
<dbReference type="GO" id="GO:0005654">
    <property type="term" value="C:nucleoplasm"/>
    <property type="evidence" value="ECO:0000304"/>
    <property type="project" value="Reactome"/>
</dbReference>
<dbReference type="GO" id="GO:0030532">
    <property type="term" value="C:small nuclear ribonucleoprotein complex"/>
    <property type="evidence" value="ECO:0000304"/>
    <property type="project" value="ProtInc"/>
</dbReference>
<dbReference type="GO" id="GO:0032797">
    <property type="term" value="C:SMN complex"/>
    <property type="evidence" value="ECO:0000314"/>
    <property type="project" value="UniProtKB"/>
</dbReference>
<dbReference type="GO" id="GO:0034719">
    <property type="term" value="C:SMN-Sm protein complex"/>
    <property type="evidence" value="ECO:0000314"/>
    <property type="project" value="UniProtKB"/>
</dbReference>
<dbReference type="GO" id="GO:0043021">
    <property type="term" value="F:ribonucleoprotein complex binding"/>
    <property type="evidence" value="ECO:0000314"/>
    <property type="project" value="MGI"/>
</dbReference>
<dbReference type="GO" id="GO:0006364">
    <property type="term" value="P:rRNA processing"/>
    <property type="evidence" value="ECO:0000304"/>
    <property type="project" value="ProtInc"/>
</dbReference>
<dbReference type="GO" id="GO:0000387">
    <property type="term" value="P:spliceosomal snRNP assembly"/>
    <property type="evidence" value="ECO:0000314"/>
    <property type="project" value="UniProtKB"/>
</dbReference>
<dbReference type="InterPro" id="IPR033265">
    <property type="entry name" value="GEMIN4"/>
</dbReference>
<dbReference type="PANTHER" id="PTHR15571">
    <property type="entry name" value="GEM-ASSOCIATED PROTEIN 4"/>
    <property type="match status" value="1"/>
</dbReference>
<dbReference type="PANTHER" id="PTHR15571:SF2">
    <property type="entry name" value="GEM-ASSOCIATED PROTEIN 4"/>
    <property type="match status" value="1"/>
</dbReference>
<proteinExistence type="evidence at protein level"/>
<name>GEMI4_HUMAN</name>
<keyword id="KW-0007">Acetylation</keyword>
<keyword id="KW-0963">Cytoplasm</keyword>
<keyword id="KW-0225">Disease variant</keyword>
<keyword id="KW-0507">mRNA processing</keyword>
<keyword id="KW-0508">mRNA splicing</keyword>
<keyword id="KW-0539">Nucleus</keyword>
<keyword id="KW-0597">Phosphoprotein</keyword>
<keyword id="KW-1267">Proteomics identification</keyword>
<keyword id="KW-1185">Reference proteome</keyword>
<evidence type="ECO:0000255" key="1"/>
<evidence type="ECO:0000269" key="2">
    <source>
    </source>
</evidence>
<evidence type="ECO:0000269" key="3">
    <source>
    </source>
</evidence>
<evidence type="ECO:0000269" key="4">
    <source>
    </source>
</evidence>
<evidence type="ECO:0000269" key="5">
    <source>
    </source>
</evidence>
<evidence type="ECO:0000269" key="6">
    <source>
    </source>
</evidence>
<evidence type="ECO:0000269" key="7">
    <source>
    </source>
</evidence>
<evidence type="ECO:0000269" key="8">
    <source>
    </source>
</evidence>
<evidence type="ECO:0000269" key="9">
    <source>
    </source>
</evidence>
<evidence type="ECO:0000305" key="10"/>
<evidence type="ECO:0007744" key="11">
    <source>
    </source>
</evidence>
<evidence type="ECO:0007744" key="12">
    <source>
    </source>
</evidence>
<evidence type="ECO:0007744" key="13">
    <source>
    </source>
</evidence>
<feature type="chain" id="PRO_0000087459" description="Gem-associated protein 4">
    <location>
        <begin position="1"/>
        <end position="1058"/>
    </location>
</feature>
<feature type="region of interest" description="Leucine-zipper" evidence="1">
    <location>
        <begin position="714"/>
        <end position="735"/>
    </location>
</feature>
<feature type="modified residue" description="N-acetylmethionine" evidence="12">
    <location>
        <position position="1"/>
    </location>
</feature>
<feature type="modified residue" description="Phosphothreonine" evidence="13">
    <location>
        <position position="84"/>
    </location>
</feature>
<feature type="modified residue" description="Phosphoserine" evidence="13">
    <location>
        <position position="86"/>
    </location>
</feature>
<feature type="modified residue" description="Phosphoserine" evidence="11">
    <location>
        <position position="205"/>
    </location>
</feature>
<feature type="sequence variant" id="VAR_082144" description="In NEDMCR." evidence="7 9">
    <original>P</original>
    <variation>L</variation>
    <location>
        <position position="105"/>
    </location>
</feature>
<feature type="sequence variant" id="VAR_056891" description="In dbSNP:rs34604548.">
    <original>F</original>
    <variation>L</variation>
    <location>
        <position position="182"/>
    </location>
</feature>
<feature type="sequence variant" id="VAR_056892" description="In dbSNP:rs34616851.">
    <original>I</original>
    <variation>V</variation>
    <location>
        <position position="502"/>
    </location>
</feature>
<feature type="sequence variant" id="VAR_024317" description="In dbSNP:rs910925.">
    <original>A</original>
    <variation>G</variation>
    <location>
        <position position="579"/>
    </location>
</feature>
<feature type="sequence variant" id="VAR_021971" description="In dbSNP:rs3744741.">
    <original>R</original>
    <variation>Q</variation>
    <location>
        <position position="684"/>
    </location>
</feature>
<feature type="sequence variant" id="VAR_056893" description="In dbSNP:rs1062923.">
    <original>I</original>
    <variation>T</variation>
    <location>
        <position position="739"/>
    </location>
</feature>
<feature type="sequence variant" id="VAR_056894" description="In dbSNP:rs8078660.">
    <original>P</original>
    <variation>L</variation>
    <location>
        <position position="749"/>
    </location>
</feature>
<feature type="sequence variant" id="VAR_056895" description="In dbSNP:rs34452716.">
    <original>F</original>
    <variation>L</variation>
    <location>
        <position position="782"/>
    </location>
</feature>
<feature type="sequence variant" id="VAR_080610" description="In NEDMCR; dbSNP:rs730882219." evidence="6 9">
    <original>W</original>
    <variation>R</variation>
    <location>
        <position position="818"/>
    </location>
</feature>
<feature type="sequence variant" id="VAR_056896" description="In dbSNP:rs34936176.">
    <original>V</original>
    <variation>F</variation>
    <location>
        <position position="824"/>
    </location>
</feature>
<feature type="sequence variant" id="VAR_056897" description="In dbSNP:rs34610323.">
    <original>V</original>
    <variation>I</variation>
    <location>
        <position position="913"/>
    </location>
</feature>
<feature type="sequence variant" id="VAR_020390" description="In dbSNP:rs7813.">
    <original>R</original>
    <variation>C</variation>
    <location>
        <position position="1033"/>
    </location>
</feature>
<feature type="sequence conflict" description="In Ref. 1; AAF35283." evidence="10" ref="1">
    <original>V</original>
    <variation>I</variation>
    <location>
        <position position="163"/>
    </location>
</feature>
<feature type="sequence conflict" description="In Ref. 1; AAF35283 and 3; CAB45743." evidence="10" ref="1 3">
    <original>Q</original>
    <variation>E</variation>
    <location>
        <position position="450"/>
    </location>
</feature>
<feature type="sequence conflict" description="In Ref. 1; AAF35283 and 3; CAB45743." evidence="10" ref="1 3">
    <original>E</original>
    <variation>V</variation>
    <location>
        <position position="593"/>
    </location>
</feature>
<feature type="sequence conflict" description="In Ref. 1; AAF35283." evidence="10" ref="1">
    <original>Q</original>
    <variation>P</variation>
    <location>
        <position position="713"/>
    </location>
</feature>
<feature type="sequence conflict" description="In Ref. 1; AAF35283 and 3; CAB45755/CAB45743." evidence="10" ref="1 3">
    <original>D</original>
    <variation>N</variation>
    <location>
        <position position="929"/>
    </location>
</feature>
<sequence>MDLGPLNICEEMTILHGGFLLAEQLFHPKALAELTKSDWERVGRPIVEALREISSAAAHSQPFAWKKKALIIIWAKVLQPHPVTPSDTETRWQEDLFFSVGNMIPTINHTILFELLKSLEASGLFIQLLMALPTTICHAELERFLEHVTVDTSAEDVAFFLDVWWEVMKHKGHPQDPLLSQFSAMAHKYLPALDEFPHPPKRLRSDPDACPTMPLLAMLLRGLTQIQSRILGPGRKCCALANLADMLTVFALTEDDPQEVSATVYLDKLATVISVWNSDTQNPYHQQALAEKVKEAERDVSLTSLAKLPSETIFVGCEFLHHLLREWGEELQAVLRSSQGTSYDSYRLCDSLTSFSQNATLYLNRTSLSKEDRQVVSELAECVRDFLRKTSTVLKNRALEDITASIAMAVIQQKMDRHMEVCYIFASEKKWAFSDEWVACLGSNRALFRQPDLVLRLLETVIDVSTADRAIPESQIRQVIHLILECYADLSLPGKNKVLAGILRSWGRKGLSEKLLAYVEGFQEDLNTTFNQLTQSASEQGLAKAVASVARLVIVHPEVTVKKMCSLAVVNLGTHKFLAQILTAFPALRFVEEQGPNSSATFMVSCLKETVWMKFSTPKEEKQFLELLNCLMSPVKPQGIPVAALLEPDEVLKEFVLPFLRLDVEEVDLSLRIFIQTLEANACREEYWLQTCSPFPLLFSLCQLLDRFSKYWQLPKEKRCLSLDRKDLAIHILELLCEIVSANAETFSPDVWIKSLSWLHRKLEQLDWTVGLRLKSFFEGHFKCEVPATLFEICKLSEDEWTSQAHPGYGAGTGLLAWMECCCVSSGISERMLSLLVVDVGNPEEVRLFSKGFLVALVQVMPWCSPQEWQRLHQLTRRLLEKQLLHVPYSLEYIQFVPLLNLKPFAQELQLSVLFLRTFQFLCSHSCRDWLPLEGWNHVVKLLCGSLTRLLDSVRAIQAAGPWVQGPEQDLTQEALFVYTQVFCHALHIMAMLHPEVCEPLYVLALETLTCYETLSKTNPSVSSLLQRAHEQRFLKSIAEGIGPEERRQTLLQKMSSF</sequence>
<comment type="function">
    <text evidence="5">The SMN complex catalyzes the assembly of small nuclear ribonucleoproteins (snRNPs), the building blocks of the spliceosome, and thereby plays an important role in the splicing of cellular pre-mRNAs. Most spliceosomal snRNPs contain a common set of Sm proteins SNRPB, SNRPD1, SNRPD2, SNRPD3, SNRPE, SNRPF and SNRPG that assemble in a heptameric protein ring on the Sm site of the small nuclear RNA to form the core snRNP (Sm core). In the cytosol, the Sm proteins SNRPD1, SNRPD2, SNRPE, SNRPF and SNRPG are trapped in an inactive 6S pICln-Sm complex by the chaperone CLNS1A that controls the assembly of the core snRNP. To assemble core snRNPs, the SMN complex accepts the trapped 5Sm proteins from CLNS1A forming an intermediate. Binding of snRNA inside 5Sm triggers eviction of the SMN complex, thereby allowing binding of SNRPD3 and SNRPB to complete assembly of the core snRNP.</text>
</comment>
<comment type="subunit">
    <text evidence="2 3 4 5 8">Part of the core SMN complex that contains SMN1, GEMIN2/SIP1, DDX20/GEMIN3, GEMIN4, GEMIN5, GEMIN6, GEMIN7, GEMIN8 and STRAP/UNRIP (PubMed:16314521, PubMed:17178713, PubMed:18984161). Part of the SMN-Sm complex that contains SMN1, GEMIN2/SIP1, DDX20/GEMIN3, GEMIN4, GEMIN5, GEMIN6, GEMIN7, GEMIN8, STRAP/UNRIP and the Sm proteins SNRPB, SNRPD1, SNRPD2, SNRPD3, SNRPE, SNRPF and SNRPG (PubMed:16314521, PubMed:18984161). Interacts with GEMIN3; the interaction is direct (PubMed:17178713, PubMed:18984161). Interacts with GEMIN5 (PubMed:33963192). Interacts with GEMIN8; the interaction is direct (PubMed:17178713). Interacts with several snRNP SM core proteins, including SNRPB, SNRPD1, SNRPD2, SNRPD3 and SNRPE (PubMed:18984161). Interacts with PPP4R2 (PubMed:12668731).</text>
</comment>
<comment type="interaction">
    <interactant intactId="EBI-356700">
        <id>P57678</id>
    </interactant>
    <interactant intactId="EBI-1211484">
        <id>P05187</id>
        <label>ALPP</label>
    </interactant>
    <organismsDiffer>false</organismsDiffer>
    <experiments>3</experiments>
</comment>
<comment type="interaction">
    <interactant intactId="EBI-356700">
        <id>P57678</id>
    </interactant>
    <interactant intactId="EBI-740814">
        <id>Q8N715</id>
        <label>CCDC185</label>
    </interactant>
    <organismsDiffer>false</organismsDiffer>
    <experiments>3</experiments>
</comment>
<comment type="interaction">
    <interactant intactId="EBI-356700">
        <id>P57678</id>
    </interactant>
    <interactant intactId="EBI-356673">
        <id>P49368</id>
        <label>CCT3</label>
    </interactant>
    <organismsDiffer>false</organismsDiffer>
    <experiments>3</experiments>
</comment>
<comment type="interaction">
    <interactant intactId="EBI-356700">
        <id>P57678</id>
    </interactant>
    <interactant intactId="EBI-11983537">
        <id>Q86Y33-5</id>
        <label>CDC20B</label>
    </interactant>
    <organismsDiffer>false</organismsDiffer>
    <experiments>3</experiments>
</comment>
<comment type="interaction">
    <interactant intactId="EBI-356700">
        <id>P57678</id>
    </interactant>
    <interactant intactId="EBI-12261896">
        <id>Q5T4B2</id>
        <label>CERCAM</label>
    </interactant>
    <organismsDiffer>false</organismsDiffer>
    <experiments>3</experiments>
</comment>
<comment type="interaction">
    <interactant intactId="EBI-356700">
        <id>P57678</id>
    </interactant>
    <interactant intactId="EBI-9038570">
        <id>P27918</id>
        <label>CFP</label>
    </interactant>
    <organismsDiffer>false</organismsDiffer>
    <experiments>3</experiments>
</comment>
<comment type="interaction">
    <interactant intactId="EBI-356700">
        <id>P57678</id>
    </interactant>
    <interactant intactId="EBI-347658">
        <id>Q9UHI6</id>
        <label>DDX20</label>
    </interactant>
    <organismsDiffer>false</organismsDiffer>
    <experiments>8</experiments>
</comment>
<comment type="interaction">
    <interactant intactId="EBI-356700">
        <id>P57678</id>
    </interactant>
    <interactant intactId="EBI-719790">
        <id>Q9NXK8</id>
        <label>FBXL12</label>
    </interactant>
    <organismsDiffer>false</organismsDiffer>
    <experiments>3</experiments>
</comment>
<comment type="interaction">
    <interactant intactId="EBI-356700">
        <id>P57678</id>
    </interactant>
    <interactant intactId="EBI-2880706">
        <id>O43593</id>
        <label>HR</label>
    </interactant>
    <organismsDiffer>false</organismsDiffer>
    <experiments>3</experiments>
</comment>
<comment type="interaction">
    <interactant intactId="EBI-356700">
        <id>P57678</id>
    </interactant>
    <interactant intactId="EBI-2556193">
        <id>Q63ZY3</id>
        <label>KANK2</label>
    </interactant>
    <organismsDiffer>false</organismsDiffer>
    <experiments>3</experiments>
</comment>
<comment type="interaction">
    <interactant intactId="EBI-356700">
        <id>P57678</id>
    </interactant>
    <interactant intactId="EBI-11953846">
        <id>Q52LG2</id>
        <label>KRTAP13-2</label>
    </interactant>
    <organismsDiffer>false</organismsDiffer>
    <experiments>3</experiments>
</comment>
<comment type="interaction">
    <interactant intactId="EBI-356700">
        <id>P57678</id>
    </interactant>
    <interactant intactId="EBI-11953996">
        <id>Q3LI77</id>
        <label>KRTAP13-4</label>
    </interactant>
    <organismsDiffer>false</organismsDiffer>
    <experiments>3</experiments>
</comment>
<comment type="interaction">
    <interactant intactId="EBI-356700">
        <id>P57678</id>
    </interactant>
    <interactant intactId="EBI-11992140">
        <id>Q3LI76</id>
        <label>KRTAP15-1</label>
    </interactant>
    <organismsDiffer>false</organismsDiffer>
    <experiments>3</experiments>
</comment>
<comment type="interaction">
    <interactant intactId="EBI-356700">
        <id>P57678</id>
    </interactant>
    <interactant intactId="EBI-14065470">
        <id>Q9BYR9</id>
        <label>KRTAP2-4</label>
    </interactant>
    <organismsDiffer>false</organismsDiffer>
    <experiments>3</experiments>
</comment>
<comment type="interaction">
    <interactant intactId="EBI-356700">
        <id>P57678</id>
    </interactant>
    <interactant intactId="EBI-1044640">
        <id>Q9BYQ4</id>
        <label>KRTAP9-2</label>
    </interactant>
    <organismsDiffer>false</organismsDiffer>
    <experiments>3</experiments>
</comment>
<comment type="interaction">
    <interactant intactId="EBI-356700">
        <id>P57678</id>
    </interactant>
    <interactant intactId="EBI-12203791">
        <id>O95711</id>
        <label>LY86</label>
    </interactant>
    <organismsDiffer>false</organismsDiffer>
    <experiments>3</experiments>
</comment>
<comment type="interaction">
    <interactant intactId="EBI-356700">
        <id>P57678</id>
    </interactant>
    <interactant intactId="EBI-747044">
        <id>P16860</id>
        <label>NPPB</label>
    </interactant>
    <organismsDiffer>false</organismsDiffer>
    <experiments>3</experiments>
</comment>
<comment type="interaction">
    <interactant intactId="EBI-356700">
        <id>P57678</id>
    </interactant>
    <interactant intactId="EBI-372273">
        <id>P20618</id>
        <label>PSMB1</label>
    </interactant>
    <organismsDiffer>false</organismsDiffer>
    <experiments>3</experiments>
</comment>
<comment type="interaction">
    <interactant intactId="EBI-356700">
        <id>P57678</id>
    </interactant>
    <interactant intactId="EBI-2560233">
        <id>O75127</id>
        <label>PTCD1</label>
    </interactant>
    <organismsDiffer>false</organismsDiffer>
    <experiments>3</experiments>
</comment>
<comment type="interaction">
    <interactant intactId="EBI-356700">
        <id>P57678</id>
    </interactant>
    <interactant intactId="EBI-1055693">
        <id>O75771</id>
        <label>RAD51D</label>
    </interactant>
    <organismsDiffer>false</organismsDiffer>
    <experiments>3</experiments>
</comment>
<comment type="interaction">
    <interactant intactId="EBI-356700">
        <id>P57678</id>
    </interactant>
    <interactant intactId="EBI-12194739">
        <id>O95977</id>
        <label>S1PR4</label>
    </interactant>
    <organismsDiffer>false</organismsDiffer>
    <experiments>3</experiments>
</comment>
<comment type="interaction">
    <interactant intactId="EBI-356700">
        <id>P57678</id>
    </interactant>
    <interactant intactId="EBI-742688">
        <id>Q9NZD8</id>
        <label>SPG21</label>
    </interactant>
    <organismsDiffer>false</organismsDiffer>
    <experiments>3</experiments>
</comment>
<comment type="interaction">
    <interactant intactId="EBI-356700">
        <id>P57678</id>
    </interactant>
    <interactant intactId="EBI-3866665">
        <id>O43609</id>
        <label>SPRY1</label>
    </interactant>
    <organismsDiffer>false</organismsDiffer>
    <experiments>4</experiments>
</comment>
<comment type="interaction">
    <interactant intactId="EBI-356700">
        <id>P57678</id>
    </interactant>
    <interactant intactId="EBI-747259">
        <id>Q03518</id>
        <label>TAP1</label>
    </interactant>
    <organismsDiffer>false</organismsDiffer>
    <experiments>3</experiments>
</comment>
<comment type="interaction">
    <interactant intactId="EBI-356700">
        <id>P57678</id>
    </interactant>
    <interactant intactId="EBI-1045733">
        <id>Q9Y3C8</id>
        <label>UFC1</label>
    </interactant>
    <organismsDiffer>false</organismsDiffer>
    <experiments>3</experiments>
</comment>
<comment type="interaction">
    <interactant intactId="EBI-356700">
        <id>P57678</id>
    </interactant>
    <interactant intactId="EBI-12041225">
        <id>Q9Y4E8-2</id>
        <label>USP15</label>
    </interactant>
    <organismsDiffer>false</organismsDiffer>
    <experiments>3</experiments>
</comment>
<comment type="interaction">
    <interactant intactId="EBI-356700">
        <id>P57678</id>
    </interactant>
    <interactant intactId="EBI-743272">
        <id>O75604</id>
        <label>USP2</label>
    </interactant>
    <organismsDiffer>false</organismsDiffer>
    <experiments>3</experiments>
</comment>
<comment type="interaction">
    <interactant intactId="EBI-356700">
        <id>P57678</id>
    </interactant>
    <interactant intactId="EBI-2560158">
        <id>Q5BKZ1</id>
        <label>ZNF326</label>
    </interactant>
    <organismsDiffer>false</organismsDiffer>
    <experiments>3</experiments>
</comment>
<comment type="interaction">
    <interactant intactId="EBI-356700">
        <id>P57678</id>
    </interactant>
    <interactant intactId="EBI-11041653">
        <id>P13682</id>
        <label>ZNF35</label>
    </interactant>
    <organismsDiffer>false</organismsDiffer>
    <experiments>3</experiments>
</comment>
<comment type="subcellular location">
    <subcellularLocation>
        <location>Cytoplasm</location>
    </subcellularLocation>
    <subcellularLocation>
        <location>Nucleus</location>
    </subcellularLocation>
    <subcellularLocation>
        <location>Nucleus</location>
        <location>Nucleolus</location>
    </subcellularLocation>
    <subcellularLocation>
        <location>Nucleus</location>
        <location>Gem</location>
    </subcellularLocation>
    <text>Localized in subnuclear structures next to coiled bodies, called gems, which are highly enriched in spliceosomal snRNPs and in the nucleolus.</text>
</comment>
<comment type="disease" evidence="6 7 9">
    <disease id="DI-05220">
        <name>Neurodevelopmental disorder with microcephaly, cataracts, and renal abnormalities</name>
        <acronym>NEDMCR</acronym>
        <description>An autosomal recessive, severe neurodevelopmental disorder characterized by global developmental delay since infancy, microcephaly, poor or absent speech, and inability to walk or spasticity. Additional features include renal abnormalities, congenital cataracts, gastroesophageal reflux disease, seizures with onset in infancy or childhood, hyporeflexia, and non-specific white matter abnormalities on brain imaging.</description>
        <dbReference type="MIM" id="617913"/>
    </disease>
    <text>The disease is caused by variants affecting the gene represented in this entry.</text>
</comment>